<proteinExistence type="inferred from homology"/>
<name>GLGA_PROM3</name>
<evidence type="ECO:0000255" key="1">
    <source>
        <dbReference type="HAMAP-Rule" id="MF_00484"/>
    </source>
</evidence>
<evidence type="ECO:0000256" key="2">
    <source>
        <dbReference type="SAM" id="MobiDB-lite"/>
    </source>
</evidence>
<reference key="1">
    <citation type="journal article" date="2007" name="PLoS Genet.">
        <title>Patterns and implications of gene gain and loss in the evolution of Prochlorococcus.</title>
        <authorList>
            <person name="Kettler G.C."/>
            <person name="Martiny A.C."/>
            <person name="Huang K."/>
            <person name="Zucker J."/>
            <person name="Coleman M.L."/>
            <person name="Rodrigue S."/>
            <person name="Chen F."/>
            <person name="Lapidus A."/>
            <person name="Ferriera S."/>
            <person name="Johnson J."/>
            <person name="Steglich C."/>
            <person name="Church G.M."/>
            <person name="Richardson P."/>
            <person name="Chisholm S.W."/>
        </authorList>
    </citation>
    <scope>NUCLEOTIDE SEQUENCE [LARGE SCALE GENOMIC DNA]</scope>
    <source>
        <strain>MIT 9303</strain>
    </source>
</reference>
<dbReference type="EC" id="2.4.1.21" evidence="1"/>
<dbReference type="EMBL" id="CP000554">
    <property type="protein sequence ID" value="ABM78625.1"/>
    <property type="molecule type" value="Genomic_DNA"/>
</dbReference>
<dbReference type="RefSeq" id="WP_011826508.1">
    <property type="nucleotide sequence ID" value="NC_008820.1"/>
</dbReference>
<dbReference type="SMR" id="A2CAW5"/>
<dbReference type="STRING" id="59922.P9303_18831"/>
<dbReference type="CAZy" id="GT5">
    <property type="family name" value="Glycosyltransferase Family 5"/>
</dbReference>
<dbReference type="KEGG" id="pmf:P9303_18831"/>
<dbReference type="HOGENOM" id="CLU_009583_18_2_3"/>
<dbReference type="BioCyc" id="PMAR59922:G1G80-1633-MONOMER"/>
<dbReference type="UniPathway" id="UPA00164"/>
<dbReference type="Proteomes" id="UP000002274">
    <property type="component" value="Chromosome"/>
</dbReference>
<dbReference type="GO" id="GO:0009011">
    <property type="term" value="F:alpha-1,4-glucan glucosyltransferase (ADP-glucose donor) activity"/>
    <property type="evidence" value="ECO:0007669"/>
    <property type="project" value="UniProtKB-UniRule"/>
</dbReference>
<dbReference type="GO" id="GO:0004373">
    <property type="term" value="F:alpha-1,4-glucan glucosyltransferase (UDP-glucose donor) activity"/>
    <property type="evidence" value="ECO:0007669"/>
    <property type="project" value="InterPro"/>
</dbReference>
<dbReference type="GO" id="GO:0005978">
    <property type="term" value="P:glycogen biosynthetic process"/>
    <property type="evidence" value="ECO:0007669"/>
    <property type="project" value="UniProtKB-UniRule"/>
</dbReference>
<dbReference type="CDD" id="cd03791">
    <property type="entry name" value="GT5_Glycogen_synthase_DULL1-like"/>
    <property type="match status" value="1"/>
</dbReference>
<dbReference type="Gene3D" id="3.40.50.2000">
    <property type="entry name" value="Glycogen Phosphorylase B"/>
    <property type="match status" value="2"/>
</dbReference>
<dbReference type="HAMAP" id="MF_00484">
    <property type="entry name" value="Glycogen_synth"/>
    <property type="match status" value="1"/>
</dbReference>
<dbReference type="InterPro" id="IPR001296">
    <property type="entry name" value="Glyco_trans_1"/>
</dbReference>
<dbReference type="InterPro" id="IPR011835">
    <property type="entry name" value="GS/SS"/>
</dbReference>
<dbReference type="InterPro" id="IPR013534">
    <property type="entry name" value="Starch_synth_cat_dom"/>
</dbReference>
<dbReference type="NCBIfam" id="TIGR02095">
    <property type="entry name" value="glgA"/>
    <property type="match status" value="1"/>
</dbReference>
<dbReference type="NCBIfam" id="NF001900">
    <property type="entry name" value="PRK00654.1-3"/>
    <property type="match status" value="1"/>
</dbReference>
<dbReference type="PANTHER" id="PTHR45825:SF11">
    <property type="entry name" value="ALPHA AMYLASE DOMAIN-CONTAINING PROTEIN"/>
    <property type="match status" value="1"/>
</dbReference>
<dbReference type="PANTHER" id="PTHR45825">
    <property type="entry name" value="GRANULE-BOUND STARCH SYNTHASE 1, CHLOROPLASTIC/AMYLOPLASTIC"/>
    <property type="match status" value="1"/>
</dbReference>
<dbReference type="Pfam" id="PF08323">
    <property type="entry name" value="Glyco_transf_5"/>
    <property type="match status" value="1"/>
</dbReference>
<dbReference type="Pfam" id="PF00534">
    <property type="entry name" value="Glycos_transf_1"/>
    <property type="match status" value="1"/>
</dbReference>
<dbReference type="SUPFAM" id="SSF53756">
    <property type="entry name" value="UDP-Glycosyltransferase/glycogen phosphorylase"/>
    <property type="match status" value="1"/>
</dbReference>
<gene>
    <name evidence="1" type="primary">glgA</name>
    <name type="ordered locus">P9303_18831</name>
</gene>
<protein>
    <recommendedName>
        <fullName evidence="1">Glycogen synthase</fullName>
        <ecNumber evidence="1">2.4.1.21</ecNumber>
    </recommendedName>
    <alternativeName>
        <fullName evidence="1">Starch [bacterial glycogen] synthase</fullName>
    </alternativeName>
</protein>
<feature type="chain" id="PRO_1000014375" description="Glycogen synthase">
    <location>
        <begin position="1"/>
        <end position="499"/>
    </location>
</feature>
<feature type="region of interest" description="Disordered" evidence="2">
    <location>
        <begin position="471"/>
        <end position="499"/>
    </location>
</feature>
<feature type="compositionally biased region" description="Polar residues" evidence="2">
    <location>
        <begin position="471"/>
        <end position="485"/>
    </location>
</feature>
<feature type="compositionally biased region" description="Basic residues" evidence="2">
    <location>
        <begin position="488"/>
        <end position="499"/>
    </location>
</feature>
<feature type="binding site" evidence="1">
    <location>
        <position position="15"/>
    </location>
    <ligand>
        <name>ADP-alpha-D-glucose</name>
        <dbReference type="ChEBI" id="CHEBI:57498"/>
    </ligand>
</feature>
<sequence>MRVLFAAAECAPMVKVGGMGDVVGSLPPALAKLDHDVRLIMPGYGKLWSLLDIPTDPIWRGQTMGNEFAIYETSHPSNGLPLYLVGHPVFDPERIYGGEDEDWRFTFFASATTEFAWNVWKPQVLHCHDWHTGMIPVWMHQDPEVSTVFTIHNLKYQGPWRWKLDRMTWCPWYMQGDHTMAAALLYADRVNAVSPTYAREICTSEYGESLDGLLNYISGKLRGILNGIDLQDWDPANDKSLPATFSADDLSGRAVNKQALQQRMGLEVNPDTYLLGMVSRLVDQKGVDLLLQVTERLLAYTDSQIVVLGTGERGLESSLWQLAIQNPGRFSVFLTYDDDLARLIYGGSDAFLMPSRFEPCGISQLLAMRYGSVPVVRKVGGLVDTVPSYDPIHKTGTGFCFDRFEPVDFYTALVRSWEAFRHRDCWRELQQRAMTQNYSWDRSALDYDQMYRDVCGLKEPSPDAAVVEQFSLGQGSDPSRQGQDSNAKKRTRRKKKGND</sequence>
<accession>A2CAW5</accession>
<keyword id="KW-0320">Glycogen biosynthesis</keyword>
<keyword id="KW-0328">Glycosyltransferase</keyword>
<keyword id="KW-0808">Transferase</keyword>
<comment type="function">
    <text evidence="1">Synthesizes alpha-1,4-glucan chains using ADP-glucose.</text>
</comment>
<comment type="catalytic activity">
    <reaction evidence="1">
        <text>[(1-&gt;4)-alpha-D-glucosyl](n) + ADP-alpha-D-glucose = [(1-&gt;4)-alpha-D-glucosyl](n+1) + ADP + H(+)</text>
        <dbReference type="Rhea" id="RHEA:18189"/>
        <dbReference type="Rhea" id="RHEA-COMP:9584"/>
        <dbReference type="Rhea" id="RHEA-COMP:9587"/>
        <dbReference type="ChEBI" id="CHEBI:15378"/>
        <dbReference type="ChEBI" id="CHEBI:15444"/>
        <dbReference type="ChEBI" id="CHEBI:57498"/>
        <dbReference type="ChEBI" id="CHEBI:456216"/>
        <dbReference type="EC" id="2.4.1.21"/>
    </reaction>
</comment>
<comment type="pathway">
    <text evidence="1">Glycan biosynthesis; glycogen biosynthesis.</text>
</comment>
<comment type="similarity">
    <text evidence="1">Belongs to the glycosyltransferase 1 family. Bacterial/plant glycogen synthase subfamily.</text>
</comment>
<organism>
    <name type="scientific">Prochlorococcus marinus (strain MIT 9303)</name>
    <dbReference type="NCBI Taxonomy" id="59922"/>
    <lineage>
        <taxon>Bacteria</taxon>
        <taxon>Bacillati</taxon>
        <taxon>Cyanobacteriota</taxon>
        <taxon>Cyanophyceae</taxon>
        <taxon>Synechococcales</taxon>
        <taxon>Prochlorococcaceae</taxon>
        <taxon>Prochlorococcus</taxon>
    </lineage>
</organism>